<dbReference type="EC" id="1.2.1.12" evidence="2"/>
<dbReference type="EMBL" id="BA000017">
    <property type="protein sequence ID" value="BAB56934.1"/>
    <property type="molecule type" value="Genomic_DNA"/>
</dbReference>
<dbReference type="RefSeq" id="WP_000279414.1">
    <property type="nucleotide sequence ID" value="NC_002758.2"/>
</dbReference>
<dbReference type="SMR" id="P0A036"/>
<dbReference type="KEGG" id="sav:SAV0772"/>
<dbReference type="HOGENOM" id="CLU_030140_0_0_9"/>
<dbReference type="PhylomeDB" id="P0A036"/>
<dbReference type="UniPathway" id="UPA00109">
    <property type="reaction ID" value="UER00184"/>
</dbReference>
<dbReference type="Proteomes" id="UP000002481">
    <property type="component" value="Chromosome"/>
</dbReference>
<dbReference type="GO" id="GO:0005737">
    <property type="term" value="C:cytoplasm"/>
    <property type="evidence" value="ECO:0007669"/>
    <property type="project" value="UniProtKB-SubCell"/>
</dbReference>
<dbReference type="GO" id="GO:0004365">
    <property type="term" value="F:glyceraldehyde-3-phosphate dehydrogenase (NAD+) (phosphorylating) activity"/>
    <property type="evidence" value="ECO:0000250"/>
    <property type="project" value="UniProtKB"/>
</dbReference>
<dbReference type="GO" id="GO:0051287">
    <property type="term" value="F:NAD binding"/>
    <property type="evidence" value="ECO:0000250"/>
    <property type="project" value="UniProtKB"/>
</dbReference>
<dbReference type="GO" id="GO:0050661">
    <property type="term" value="F:NADP binding"/>
    <property type="evidence" value="ECO:0007669"/>
    <property type="project" value="InterPro"/>
</dbReference>
<dbReference type="GO" id="GO:0006006">
    <property type="term" value="P:glucose metabolic process"/>
    <property type="evidence" value="ECO:0007669"/>
    <property type="project" value="InterPro"/>
</dbReference>
<dbReference type="GO" id="GO:0006096">
    <property type="term" value="P:glycolytic process"/>
    <property type="evidence" value="ECO:0007669"/>
    <property type="project" value="UniProtKB-UniPathway"/>
</dbReference>
<dbReference type="CDD" id="cd18126">
    <property type="entry name" value="GAPDH_I_C"/>
    <property type="match status" value="1"/>
</dbReference>
<dbReference type="CDD" id="cd05214">
    <property type="entry name" value="GAPDH_I_N"/>
    <property type="match status" value="1"/>
</dbReference>
<dbReference type="FunFam" id="3.30.360.10:FF:000002">
    <property type="entry name" value="Glyceraldehyde-3-phosphate dehydrogenase"/>
    <property type="match status" value="1"/>
</dbReference>
<dbReference type="FunFam" id="3.40.50.720:FF:000001">
    <property type="entry name" value="Glyceraldehyde-3-phosphate dehydrogenase"/>
    <property type="match status" value="1"/>
</dbReference>
<dbReference type="Gene3D" id="3.30.360.10">
    <property type="entry name" value="Dihydrodipicolinate Reductase, domain 2"/>
    <property type="match status" value="1"/>
</dbReference>
<dbReference type="Gene3D" id="3.40.50.720">
    <property type="entry name" value="NAD(P)-binding Rossmann-like Domain"/>
    <property type="match status" value="1"/>
</dbReference>
<dbReference type="InterPro" id="IPR020831">
    <property type="entry name" value="GlycerAld/Erythrose_P_DH"/>
</dbReference>
<dbReference type="InterPro" id="IPR020830">
    <property type="entry name" value="GlycerAld_3-P_DH_AS"/>
</dbReference>
<dbReference type="InterPro" id="IPR020829">
    <property type="entry name" value="GlycerAld_3-P_DH_cat"/>
</dbReference>
<dbReference type="InterPro" id="IPR020828">
    <property type="entry name" value="GlycerAld_3-P_DH_NAD(P)-bd"/>
</dbReference>
<dbReference type="InterPro" id="IPR006424">
    <property type="entry name" value="Glyceraldehyde-3-P_DH_1"/>
</dbReference>
<dbReference type="InterPro" id="IPR036291">
    <property type="entry name" value="NAD(P)-bd_dom_sf"/>
</dbReference>
<dbReference type="NCBIfam" id="TIGR01534">
    <property type="entry name" value="GAPDH-I"/>
    <property type="match status" value="1"/>
</dbReference>
<dbReference type="PANTHER" id="PTHR43148">
    <property type="entry name" value="GLYCERALDEHYDE-3-PHOSPHATE DEHYDROGENASE 2"/>
    <property type="match status" value="1"/>
</dbReference>
<dbReference type="Pfam" id="PF02800">
    <property type="entry name" value="Gp_dh_C"/>
    <property type="match status" value="1"/>
</dbReference>
<dbReference type="Pfam" id="PF00044">
    <property type="entry name" value="Gp_dh_N"/>
    <property type="match status" value="1"/>
</dbReference>
<dbReference type="PIRSF" id="PIRSF000149">
    <property type="entry name" value="GAP_DH"/>
    <property type="match status" value="1"/>
</dbReference>
<dbReference type="PRINTS" id="PR00078">
    <property type="entry name" value="G3PDHDRGNASE"/>
</dbReference>
<dbReference type="SMART" id="SM00846">
    <property type="entry name" value="Gp_dh_N"/>
    <property type="match status" value="1"/>
</dbReference>
<dbReference type="SUPFAM" id="SSF55347">
    <property type="entry name" value="Glyceraldehyde-3-phosphate dehydrogenase-like, C-terminal domain"/>
    <property type="match status" value="1"/>
</dbReference>
<dbReference type="SUPFAM" id="SSF51735">
    <property type="entry name" value="NAD(P)-binding Rossmann-fold domains"/>
    <property type="match status" value="1"/>
</dbReference>
<dbReference type="PROSITE" id="PS00071">
    <property type="entry name" value="GAPDH"/>
    <property type="match status" value="1"/>
</dbReference>
<protein>
    <recommendedName>
        <fullName evidence="2">Glyceraldehyde-3-phosphate dehydrogenase 1</fullName>
        <shortName evidence="2">GAPDH 1</shortName>
        <ecNumber evidence="2">1.2.1.12</ecNumber>
    </recommendedName>
    <alternativeName>
        <fullName evidence="2">NAD-dependent glyceraldehyde-3-phosphate dehydrogenase</fullName>
    </alternativeName>
</protein>
<accession>P0A036</accession>
<accession>Q9Z5C5</accession>
<keyword id="KW-0963">Cytoplasm</keyword>
<keyword id="KW-0324">Glycolysis</keyword>
<keyword id="KW-0520">NAD</keyword>
<keyword id="KW-0547">Nucleotide-binding</keyword>
<keyword id="KW-0560">Oxidoreductase</keyword>
<reference key="1">
    <citation type="journal article" date="2001" name="Lancet">
        <title>Whole genome sequencing of meticillin-resistant Staphylococcus aureus.</title>
        <authorList>
            <person name="Kuroda M."/>
            <person name="Ohta T."/>
            <person name="Uchiyama I."/>
            <person name="Baba T."/>
            <person name="Yuzawa H."/>
            <person name="Kobayashi I."/>
            <person name="Cui L."/>
            <person name="Oguchi A."/>
            <person name="Aoki K."/>
            <person name="Nagai Y."/>
            <person name="Lian J.-Q."/>
            <person name="Ito T."/>
            <person name="Kanamori M."/>
            <person name="Matsumaru H."/>
            <person name="Maruyama A."/>
            <person name="Murakami H."/>
            <person name="Hosoyama A."/>
            <person name="Mizutani-Ui Y."/>
            <person name="Takahashi N.K."/>
            <person name="Sawano T."/>
            <person name="Inoue R."/>
            <person name="Kaito C."/>
            <person name="Sekimizu K."/>
            <person name="Hirakawa H."/>
            <person name="Kuhara S."/>
            <person name="Goto S."/>
            <person name="Yabuzaki J."/>
            <person name="Kanehisa M."/>
            <person name="Yamashita A."/>
            <person name="Oshima K."/>
            <person name="Furuya K."/>
            <person name="Yoshino C."/>
            <person name="Shiba T."/>
            <person name="Hattori M."/>
            <person name="Ogasawara N."/>
            <person name="Hayashi H."/>
            <person name="Hiramatsu K."/>
        </authorList>
    </citation>
    <scope>NUCLEOTIDE SEQUENCE [LARGE SCALE GENOMIC DNA]</scope>
    <source>
        <strain>Mu50 / ATCC 700699</strain>
    </source>
</reference>
<feature type="chain" id="PRO_0000145683" description="Glyceraldehyde-3-phosphate dehydrogenase 1">
    <location>
        <begin position="1"/>
        <end position="336"/>
    </location>
</feature>
<feature type="active site" description="Nucleophile" evidence="2">
    <location>
        <position position="151"/>
    </location>
</feature>
<feature type="binding site" evidence="2">
    <location>
        <begin position="12"/>
        <end position="13"/>
    </location>
    <ligand>
        <name>NAD(+)</name>
        <dbReference type="ChEBI" id="CHEBI:57540"/>
    </ligand>
</feature>
<feature type="binding site" evidence="2">
    <location>
        <position position="34"/>
    </location>
    <ligand>
        <name>NAD(+)</name>
        <dbReference type="ChEBI" id="CHEBI:57540"/>
    </ligand>
</feature>
<feature type="binding site" evidence="2">
    <location>
        <position position="120"/>
    </location>
    <ligand>
        <name>NAD(+)</name>
        <dbReference type="ChEBI" id="CHEBI:57540"/>
    </ligand>
</feature>
<feature type="binding site" evidence="2">
    <location>
        <begin position="150"/>
        <end position="152"/>
    </location>
    <ligand>
        <name>D-glyceraldehyde 3-phosphate</name>
        <dbReference type="ChEBI" id="CHEBI:59776"/>
    </ligand>
</feature>
<feature type="binding site" evidence="2">
    <location>
        <position position="181"/>
    </location>
    <ligand>
        <name>D-glyceraldehyde 3-phosphate</name>
        <dbReference type="ChEBI" id="CHEBI:59776"/>
    </ligand>
</feature>
<feature type="binding site" evidence="1">
    <location>
        <position position="198"/>
    </location>
    <ligand>
        <name>D-glyceraldehyde 3-phosphate</name>
        <dbReference type="ChEBI" id="CHEBI:59776"/>
    </ligand>
</feature>
<feature type="binding site" evidence="2">
    <location>
        <begin position="211"/>
        <end position="212"/>
    </location>
    <ligand>
        <name>D-glyceraldehyde 3-phosphate</name>
        <dbReference type="ChEBI" id="CHEBI:59776"/>
    </ligand>
</feature>
<feature type="binding site" evidence="2">
    <location>
        <position position="234"/>
    </location>
    <ligand>
        <name>D-glyceraldehyde 3-phosphate</name>
        <dbReference type="ChEBI" id="CHEBI:59776"/>
    </ligand>
</feature>
<feature type="binding site" evidence="2">
    <location>
        <position position="316"/>
    </location>
    <ligand>
        <name>NAD(+)</name>
        <dbReference type="ChEBI" id="CHEBI:57540"/>
    </ligand>
</feature>
<feature type="site" description="Activates thiol group during catalysis" evidence="2">
    <location>
        <position position="178"/>
    </location>
</feature>
<proteinExistence type="inferred from homology"/>
<evidence type="ECO:0000250" key="1">
    <source>
        <dbReference type="UniProtKB" id="P00362"/>
    </source>
</evidence>
<evidence type="ECO:0000250" key="2">
    <source>
        <dbReference type="UniProtKB" id="Q6GIL8"/>
    </source>
</evidence>
<evidence type="ECO:0000305" key="3"/>
<gene>
    <name type="primary">gapA1</name>
    <name type="synonym">gap</name>
    <name type="synonym">gapA</name>
    <name type="ordered locus">SAV0772</name>
</gene>
<comment type="function">
    <text evidence="2">Catalyzes the oxidative phosphorylation of glyceraldehyde 3-phosphate (G3P) to 1,3-bisphosphoglycerate (BPG) using the cofactor NAD. The first reaction step involves the formation of a hemiacetal intermediate between G3P and a cysteine residue, and this hemiacetal intermediate is then oxidized to a thioester, with concomitant reduction of NAD to NADH. The reduced NADH is then exchanged with the second NAD, and the thioester is attacked by a nucleophilic inorganic phosphate to produce BPG.</text>
</comment>
<comment type="catalytic activity">
    <reaction evidence="2">
        <text>D-glyceraldehyde 3-phosphate + phosphate + NAD(+) = (2R)-3-phospho-glyceroyl phosphate + NADH + H(+)</text>
        <dbReference type="Rhea" id="RHEA:10300"/>
        <dbReference type="ChEBI" id="CHEBI:15378"/>
        <dbReference type="ChEBI" id="CHEBI:43474"/>
        <dbReference type="ChEBI" id="CHEBI:57540"/>
        <dbReference type="ChEBI" id="CHEBI:57604"/>
        <dbReference type="ChEBI" id="CHEBI:57945"/>
        <dbReference type="ChEBI" id="CHEBI:59776"/>
        <dbReference type="EC" id="1.2.1.12"/>
    </reaction>
</comment>
<comment type="pathway">
    <text evidence="3">Carbohydrate degradation; glycolysis; pyruvate from D-glyceraldehyde 3-phosphate: step 1/5.</text>
</comment>
<comment type="subunit">
    <text evidence="2">Homotetramer.</text>
</comment>
<comment type="subcellular location">
    <subcellularLocation>
        <location evidence="3">Cytoplasm</location>
    </subcellularLocation>
</comment>
<comment type="similarity">
    <text evidence="3">Belongs to the glyceraldehyde-3-phosphate dehydrogenase family.</text>
</comment>
<organism>
    <name type="scientific">Staphylococcus aureus (strain Mu50 / ATCC 700699)</name>
    <dbReference type="NCBI Taxonomy" id="158878"/>
    <lineage>
        <taxon>Bacteria</taxon>
        <taxon>Bacillati</taxon>
        <taxon>Bacillota</taxon>
        <taxon>Bacilli</taxon>
        <taxon>Bacillales</taxon>
        <taxon>Staphylococcaceae</taxon>
        <taxon>Staphylococcus</taxon>
    </lineage>
</organism>
<name>G3P1_STAAM</name>
<sequence length="336" mass="36281">MAVKVAINGFGRIGRLAFRRIQEVEGLEVVAVNDLTDDDMLAHLLKYDTMQGRFTGEVEVVDGGFRVNGKEVKSFSEPDASKLPWKDLNIDVVLECTGFYTDKDKAQAHIEAGAKKVLISAPATGDLKTIVFNTNHQELDGSETVVSGASCTTNSLAPVAKVLNDDFGLVEGLMTTIHAYTGDQNTQDAPHRKGDKRRARAAAENIIPNSTGAAKAIGKVIPEIDGKLDGGAQRVPVATGSLTELTVVLEKQDVTVEQVNEAMKNASNESFGYTEDEIVSSDVVGMTYGSLFDATQTRVMSVGDRQLVKVAAWYDNEMSYTAQLVRTLAYLAELSK</sequence>